<accession>Q01SK1</accession>
<protein>
    <recommendedName>
        <fullName evidence="1">UPF0182 protein Acid_6445</fullName>
    </recommendedName>
</protein>
<gene>
    <name type="ordered locus">Acid_6445</name>
</gene>
<name>Y6445_SOLUE</name>
<sequence>MQRHELPPGRRSPATRITLLAILLFLLFGLRSFAGYAIEIEWWKELGQLNTWFSMLYYGIAPVAVATLVAFLALWISHARALKFAGTGLGEHKLYARISTLALLFLAWFIAAGAIDTWTVVRFAGSRGLPAAAAGWHDNIFNKPLSFYLFDLPFYSLLRSYVLAVIIFCVLLYWIAARGWQLRFRMPHLRDAQELDPAFFKLEGGLESRFLRGAAVIGLIALAVRFYLGRYEMAYNEHGSFLVGIDYVDQNIGLPLQWLVIFACLAAAAFVAMGRWFLAALMALALVVDFAAPRIVSALYVRPNEISLQRPYIETHIHATRSAFGIEQNVREVEFKAKPEAPIDVAANKPLLDNVRLWDTRAFHDTVTQIQALRPYYVFADTDVDRYTIDGQYRQVLLTPRELDLRQLPAARANWINPAFIYTHGYGVVLAPVSQITPDGLPVLFIENAPPEVKASSLKLTRPELYYGEVTHEPVFVDTAREEFNYPSGESNVTSRYEGKGGFPISSLGMRMAAAIREGEPNILLTSYLKPNSRMMIHRKVEDRLHELAGFLEWDSDPYLVITDAGRLVWMIDGYTTSEAHPYARSVDVPDIGRVNYIRNAVKATVDAYDGETHMYVFAPDDPIISAYQRLFPDLFQPSDKMPADLRRHARYPETLFRAQAEIYRTYHMLDPQSFYNKEDLWDLARHTTAQNGGAEPVTPTYVVATLPGEAKPEFLLLIPFTPRNKDNLIGLMVARCDGKSLGDMVVLQLSKQELIFGPMQIGARINQDQTISKDLTLWNQQGSQVLRGQILVLPVGNTFLYVDPIYIQATEARMPQLKKIVLAVGNRLIYADTYDQALAQLSSGAQALVTEATAPGSSTAPKAAAVAPATGDARLQSVRDHLRRYRELASQGKWSDAGKELEAIEALVK</sequence>
<keyword id="KW-1003">Cell membrane</keyword>
<keyword id="KW-0472">Membrane</keyword>
<keyword id="KW-0812">Transmembrane</keyword>
<keyword id="KW-1133">Transmembrane helix</keyword>
<proteinExistence type="inferred from homology"/>
<reference key="1">
    <citation type="journal article" date="2009" name="Appl. Environ. Microbiol.">
        <title>Three genomes from the phylum Acidobacteria provide insight into the lifestyles of these microorganisms in soils.</title>
        <authorList>
            <person name="Ward N.L."/>
            <person name="Challacombe J.F."/>
            <person name="Janssen P.H."/>
            <person name="Henrissat B."/>
            <person name="Coutinho P.M."/>
            <person name="Wu M."/>
            <person name="Xie G."/>
            <person name="Haft D.H."/>
            <person name="Sait M."/>
            <person name="Badger J."/>
            <person name="Barabote R.D."/>
            <person name="Bradley B."/>
            <person name="Brettin T.S."/>
            <person name="Brinkac L.M."/>
            <person name="Bruce D."/>
            <person name="Creasy T."/>
            <person name="Daugherty S.C."/>
            <person name="Davidsen T.M."/>
            <person name="DeBoy R.T."/>
            <person name="Detter J.C."/>
            <person name="Dodson R.J."/>
            <person name="Durkin A.S."/>
            <person name="Ganapathy A."/>
            <person name="Gwinn-Giglio M."/>
            <person name="Han C.S."/>
            <person name="Khouri H."/>
            <person name="Kiss H."/>
            <person name="Kothari S.P."/>
            <person name="Madupu R."/>
            <person name="Nelson K.E."/>
            <person name="Nelson W.C."/>
            <person name="Paulsen I."/>
            <person name="Penn K."/>
            <person name="Ren Q."/>
            <person name="Rosovitz M.J."/>
            <person name="Selengut J.D."/>
            <person name="Shrivastava S."/>
            <person name="Sullivan S.A."/>
            <person name="Tapia R."/>
            <person name="Thompson L.S."/>
            <person name="Watkins K.L."/>
            <person name="Yang Q."/>
            <person name="Yu C."/>
            <person name="Zafar N."/>
            <person name="Zhou L."/>
            <person name="Kuske C.R."/>
        </authorList>
    </citation>
    <scope>NUCLEOTIDE SEQUENCE [LARGE SCALE GENOMIC DNA]</scope>
    <source>
        <strain>Ellin6076</strain>
    </source>
</reference>
<feature type="chain" id="PRO_5000005135" description="UPF0182 protein Acid_6445">
    <location>
        <begin position="1"/>
        <end position="910"/>
    </location>
</feature>
<feature type="transmembrane region" description="Helical" evidence="1">
    <location>
        <begin position="17"/>
        <end position="37"/>
    </location>
</feature>
<feature type="transmembrane region" description="Helical" evidence="1">
    <location>
        <begin position="56"/>
        <end position="76"/>
    </location>
</feature>
<feature type="transmembrane region" description="Helical" evidence="1">
    <location>
        <begin position="101"/>
        <end position="121"/>
    </location>
</feature>
<feature type="transmembrane region" description="Helical" evidence="1">
    <location>
        <begin position="157"/>
        <end position="177"/>
    </location>
</feature>
<feature type="transmembrane region" description="Helical" evidence="1">
    <location>
        <begin position="210"/>
        <end position="229"/>
    </location>
</feature>
<feature type="transmembrane region" description="Helical" evidence="1">
    <location>
        <begin position="252"/>
        <end position="272"/>
    </location>
</feature>
<feature type="transmembrane region" description="Helical" evidence="1">
    <location>
        <begin position="276"/>
        <end position="296"/>
    </location>
</feature>
<evidence type="ECO:0000255" key="1">
    <source>
        <dbReference type="HAMAP-Rule" id="MF_01600"/>
    </source>
</evidence>
<comment type="subcellular location">
    <subcellularLocation>
        <location evidence="1">Cell membrane</location>
        <topology evidence="1">Multi-pass membrane protein</topology>
    </subcellularLocation>
</comment>
<comment type="similarity">
    <text evidence="1">Belongs to the UPF0182 family.</text>
</comment>
<dbReference type="EMBL" id="CP000473">
    <property type="protein sequence ID" value="ABJ87369.1"/>
    <property type="molecule type" value="Genomic_DNA"/>
</dbReference>
<dbReference type="SMR" id="Q01SK1"/>
<dbReference type="STRING" id="234267.Acid_6445"/>
<dbReference type="KEGG" id="sus:Acid_6445"/>
<dbReference type="eggNOG" id="COG1615">
    <property type="taxonomic scope" value="Bacteria"/>
</dbReference>
<dbReference type="HOGENOM" id="CLU_007733_0_0_0"/>
<dbReference type="InParanoid" id="Q01SK1"/>
<dbReference type="OrthoDB" id="9763654at2"/>
<dbReference type="GO" id="GO:0005576">
    <property type="term" value="C:extracellular region"/>
    <property type="evidence" value="ECO:0007669"/>
    <property type="project" value="TreeGrafter"/>
</dbReference>
<dbReference type="GO" id="GO:0005886">
    <property type="term" value="C:plasma membrane"/>
    <property type="evidence" value="ECO:0007669"/>
    <property type="project" value="UniProtKB-SubCell"/>
</dbReference>
<dbReference type="HAMAP" id="MF_01600">
    <property type="entry name" value="UPF0182"/>
    <property type="match status" value="1"/>
</dbReference>
<dbReference type="InterPro" id="IPR005372">
    <property type="entry name" value="UPF0182"/>
</dbReference>
<dbReference type="PANTHER" id="PTHR39344">
    <property type="entry name" value="UPF0182 PROTEIN SLL1060"/>
    <property type="match status" value="1"/>
</dbReference>
<dbReference type="PANTHER" id="PTHR39344:SF1">
    <property type="entry name" value="UPF0182 PROTEIN SLL1060"/>
    <property type="match status" value="1"/>
</dbReference>
<dbReference type="Pfam" id="PF03699">
    <property type="entry name" value="UPF0182"/>
    <property type="match status" value="1"/>
</dbReference>
<organism>
    <name type="scientific">Solibacter usitatus (strain Ellin6076)</name>
    <dbReference type="NCBI Taxonomy" id="234267"/>
    <lineage>
        <taxon>Bacteria</taxon>
        <taxon>Pseudomonadati</taxon>
        <taxon>Acidobacteriota</taxon>
        <taxon>Terriglobia</taxon>
        <taxon>Bryobacterales</taxon>
        <taxon>Solibacteraceae</taxon>
        <taxon>Candidatus Solibacter</taxon>
    </lineage>
</organism>